<sequence length="236" mass="24175">MPPKKTETKAADASAAAAPAPAAAPTSAPKTKSPSTHASYLDMITDAIVALKDRAGSSRQALKKYVRANNTLGNVTDNMFDSLFNKALKNGVDKGVFEQPKGPSGGTKLAKKVAKPAPKKAAPKKETKEKKPAAAKKEGAAKKETKEKKAPAAKKAAAPKKAAAPKKEVKEKKAAAPKKKAAAPAVADKETVLTKTKSGRVAKSTAKPAAAKKAAAPKKAAASKKAEKAEPAAEKA</sequence>
<organism>
    <name type="scientific">Neurospora crassa (strain ATCC 24698 / 74-OR23-1A / CBS 708.71 / DSM 1257 / FGSC 987)</name>
    <dbReference type="NCBI Taxonomy" id="367110"/>
    <lineage>
        <taxon>Eukaryota</taxon>
        <taxon>Fungi</taxon>
        <taxon>Dikarya</taxon>
        <taxon>Ascomycota</taxon>
        <taxon>Pezizomycotina</taxon>
        <taxon>Sordariomycetes</taxon>
        <taxon>Sordariomycetidae</taxon>
        <taxon>Sordariales</taxon>
        <taxon>Sordariaceae</taxon>
        <taxon>Neurospora</taxon>
    </lineage>
</organism>
<gene>
    <name type="primary">hH1</name>
    <name type="ORF">NCU06863</name>
</gene>
<feature type="chain" id="PRO_0000196000" description="Histone H1">
    <location>
        <begin position="1"/>
        <end position="236"/>
    </location>
</feature>
<feature type="domain" description="H15" evidence="1">
    <location>
        <begin position="36"/>
        <end position="111"/>
    </location>
</feature>
<feature type="region of interest" description="Disordered" evidence="2">
    <location>
        <begin position="1"/>
        <end position="36"/>
    </location>
</feature>
<feature type="region of interest" description="Disordered" evidence="2">
    <location>
        <begin position="94"/>
        <end position="236"/>
    </location>
</feature>
<feature type="compositionally biased region" description="Basic and acidic residues" evidence="2">
    <location>
        <begin position="1"/>
        <end position="10"/>
    </location>
</feature>
<feature type="compositionally biased region" description="Low complexity" evidence="2">
    <location>
        <begin position="11"/>
        <end position="36"/>
    </location>
</feature>
<feature type="compositionally biased region" description="Basic residues" evidence="2">
    <location>
        <begin position="109"/>
        <end position="122"/>
    </location>
</feature>
<feature type="compositionally biased region" description="Basic and acidic residues" evidence="2">
    <location>
        <begin position="123"/>
        <end position="150"/>
    </location>
</feature>
<feature type="compositionally biased region" description="Low complexity" evidence="2">
    <location>
        <begin position="153"/>
        <end position="162"/>
    </location>
</feature>
<feature type="compositionally biased region" description="Basic and acidic residues" evidence="2">
    <location>
        <begin position="165"/>
        <end position="174"/>
    </location>
</feature>
<feature type="compositionally biased region" description="Low complexity" evidence="2">
    <location>
        <begin position="202"/>
        <end position="220"/>
    </location>
</feature>
<feature type="compositionally biased region" description="Basic and acidic residues" evidence="2">
    <location>
        <begin position="224"/>
        <end position="236"/>
    </location>
</feature>
<name>H1_NEUCR</name>
<protein>
    <recommendedName>
        <fullName>Histone H1</fullName>
    </recommendedName>
</protein>
<proteinExistence type="inferred from homology"/>
<accession>Q8J0U2</accession>
<accession>Q7S0F2</accession>
<accession>V5IKS4</accession>
<dbReference type="EMBL" id="AY124883">
    <property type="protein sequence ID" value="AAM75420.1"/>
    <property type="molecule type" value="Genomic_DNA"/>
</dbReference>
<dbReference type="EMBL" id="CM002242">
    <property type="protein sequence ID" value="ESA41820.1"/>
    <property type="molecule type" value="Genomic_DNA"/>
</dbReference>
<dbReference type="RefSeq" id="XP_011395247.1">
    <property type="nucleotide sequence ID" value="XM_011396945.1"/>
</dbReference>
<dbReference type="SMR" id="Q8J0U2"/>
<dbReference type="STRING" id="367110.Q8J0U2"/>
<dbReference type="PaxDb" id="5141-EFNCRP00000006789"/>
<dbReference type="EnsemblFungi" id="ESA41820">
    <property type="protein sequence ID" value="ESA41820"/>
    <property type="gene ID" value="NCU06863"/>
</dbReference>
<dbReference type="GeneID" id="3874176"/>
<dbReference type="KEGG" id="ncr:NCU06863"/>
<dbReference type="VEuPathDB" id="FungiDB:NCU06863"/>
<dbReference type="HOGENOM" id="CLU_052897_0_1_1"/>
<dbReference type="InParanoid" id="Q8J0U2"/>
<dbReference type="OMA" id="IKNHYKV"/>
<dbReference type="OrthoDB" id="1110759at2759"/>
<dbReference type="Proteomes" id="UP000001805">
    <property type="component" value="Chromosome 7, Linkage Group VII"/>
</dbReference>
<dbReference type="GO" id="GO:0000786">
    <property type="term" value="C:nucleosome"/>
    <property type="evidence" value="ECO:0007669"/>
    <property type="project" value="InterPro"/>
</dbReference>
<dbReference type="GO" id="GO:0005634">
    <property type="term" value="C:nucleus"/>
    <property type="evidence" value="ECO:0000318"/>
    <property type="project" value="GO_Central"/>
</dbReference>
<dbReference type="GO" id="GO:0003690">
    <property type="term" value="F:double-stranded DNA binding"/>
    <property type="evidence" value="ECO:0000318"/>
    <property type="project" value="GO_Central"/>
</dbReference>
<dbReference type="GO" id="GO:0031492">
    <property type="term" value="F:nucleosomal DNA binding"/>
    <property type="evidence" value="ECO:0000318"/>
    <property type="project" value="GO_Central"/>
</dbReference>
<dbReference type="GO" id="GO:0030527">
    <property type="term" value="F:structural constituent of chromatin"/>
    <property type="evidence" value="ECO:0007669"/>
    <property type="project" value="InterPro"/>
</dbReference>
<dbReference type="GO" id="GO:0030261">
    <property type="term" value="P:chromosome condensation"/>
    <property type="evidence" value="ECO:0000318"/>
    <property type="project" value="GO_Central"/>
</dbReference>
<dbReference type="GO" id="GO:0045910">
    <property type="term" value="P:negative regulation of DNA recombination"/>
    <property type="evidence" value="ECO:0000318"/>
    <property type="project" value="GO_Central"/>
</dbReference>
<dbReference type="GO" id="GO:0006334">
    <property type="term" value="P:nucleosome assembly"/>
    <property type="evidence" value="ECO:0007669"/>
    <property type="project" value="InterPro"/>
</dbReference>
<dbReference type="CDD" id="cd00073">
    <property type="entry name" value="H15"/>
    <property type="match status" value="1"/>
</dbReference>
<dbReference type="FunFam" id="1.10.10.10:FF:000383">
    <property type="entry name" value="Histone H1"/>
    <property type="match status" value="1"/>
</dbReference>
<dbReference type="Gene3D" id="1.10.10.10">
    <property type="entry name" value="Winged helix-like DNA-binding domain superfamily/Winged helix DNA-binding domain"/>
    <property type="match status" value="1"/>
</dbReference>
<dbReference type="InterPro" id="IPR005819">
    <property type="entry name" value="H1/H5"/>
</dbReference>
<dbReference type="InterPro" id="IPR005818">
    <property type="entry name" value="Histone_H1/H5_H15"/>
</dbReference>
<dbReference type="InterPro" id="IPR036388">
    <property type="entry name" value="WH-like_DNA-bd_sf"/>
</dbReference>
<dbReference type="InterPro" id="IPR036390">
    <property type="entry name" value="WH_DNA-bd_sf"/>
</dbReference>
<dbReference type="Pfam" id="PF00538">
    <property type="entry name" value="Linker_histone"/>
    <property type="match status" value="1"/>
</dbReference>
<dbReference type="PRINTS" id="PR00624">
    <property type="entry name" value="HISTONEH5"/>
</dbReference>
<dbReference type="SMART" id="SM00526">
    <property type="entry name" value="H15"/>
    <property type="match status" value="1"/>
</dbReference>
<dbReference type="SUPFAM" id="SSF46785">
    <property type="entry name" value="Winged helix' DNA-binding domain"/>
    <property type="match status" value="1"/>
</dbReference>
<dbReference type="PROSITE" id="PS51504">
    <property type="entry name" value="H15"/>
    <property type="match status" value="1"/>
</dbReference>
<reference key="1">
    <citation type="submission" date="2002-06" db="EMBL/GenBank/DDBJ databases">
        <title>N. crassa histone H1 gene.</title>
        <authorList>
            <person name="Folco H.D."/>
            <person name="Rosa A.L."/>
        </authorList>
    </citation>
    <scope>NUCLEOTIDE SEQUENCE [GENOMIC DNA]</scope>
</reference>
<reference key="2">
    <citation type="journal article" date="2003" name="Nature">
        <title>The genome sequence of the filamentous fungus Neurospora crassa.</title>
        <authorList>
            <person name="Galagan J.E."/>
            <person name="Calvo S.E."/>
            <person name="Borkovich K.A."/>
            <person name="Selker E.U."/>
            <person name="Read N.D."/>
            <person name="Jaffe D.B."/>
            <person name="FitzHugh W."/>
            <person name="Ma L.-J."/>
            <person name="Smirnov S."/>
            <person name="Purcell S."/>
            <person name="Rehman B."/>
            <person name="Elkins T."/>
            <person name="Engels R."/>
            <person name="Wang S."/>
            <person name="Nielsen C.B."/>
            <person name="Butler J."/>
            <person name="Endrizzi M."/>
            <person name="Qui D."/>
            <person name="Ianakiev P."/>
            <person name="Bell-Pedersen D."/>
            <person name="Nelson M.A."/>
            <person name="Werner-Washburne M."/>
            <person name="Selitrennikoff C.P."/>
            <person name="Kinsey J.A."/>
            <person name="Braun E.L."/>
            <person name="Zelter A."/>
            <person name="Schulte U."/>
            <person name="Kothe G.O."/>
            <person name="Jedd G."/>
            <person name="Mewes H.-W."/>
            <person name="Staben C."/>
            <person name="Marcotte E."/>
            <person name="Greenberg D."/>
            <person name="Roy A."/>
            <person name="Foley K."/>
            <person name="Naylor J."/>
            <person name="Stange-Thomann N."/>
            <person name="Barrett R."/>
            <person name="Gnerre S."/>
            <person name="Kamal M."/>
            <person name="Kamvysselis M."/>
            <person name="Mauceli E.W."/>
            <person name="Bielke C."/>
            <person name="Rudd S."/>
            <person name="Frishman D."/>
            <person name="Krystofova S."/>
            <person name="Rasmussen C."/>
            <person name="Metzenberg R.L."/>
            <person name="Perkins D.D."/>
            <person name="Kroken S."/>
            <person name="Cogoni C."/>
            <person name="Macino G."/>
            <person name="Catcheside D.E.A."/>
            <person name="Li W."/>
            <person name="Pratt R.J."/>
            <person name="Osmani S.A."/>
            <person name="DeSouza C.P.C."/>
            <person name="Glass N.L."/>
            <person name="Orbach M.J."/>
            <person name="Berglund J.A."/>
            <person name="Voelker R."/>
            <person name="Yarden O."/>
            <person name="Plamann M."/>
            <person name="Seiler S."/>
            <person name="Dunlap J.C."/>
            <person name="Radford A."/>
            <person name="Aramayo R."/>
            <person name="Natvig D.O."/>
            <person name="Alex L.A."/>
            <person name="Mannhaupt G."/>
            <person name="Ebbole D.J."/>
            <person name="Freitag M."/>
            <person name="Paulsen I."/>
            <person name="Sachs M.S."/>
            <person name="Lander E.S."/>
            <person name="Nusbaum C."/>
            <person name="Birren B.W."/>
        </authorList>
    </citation>
    <scope>NUCLEOTIDE SEQUENCE [LARGE SCALE GENOMIC DNA]</scope>
    <source>
        <strain>ATCC 24698 / 74-OR23-1A / CBS 708.71 / DSM 1257 / FGSC 987</strain>
    </source>
</reference>
<keyword id="KW-0158">Chromosome</keyword>
<keyword id="KW-0238">DNA-binding</keyword>
<keyword id="KW-0539">Nucleus</keyword>
<keyword id="KW-1185">Reference proteome</keyword>
<comment type="function">
    <text>Could act as an H1-type linker histone.</text>
</comment>
<comment type="subcellular location">
    <subcellularLocation>
        <location evidence="1">Nucleus</location>
    </subcellularLocation>
    <subcellularLocation>
        <location evidence="1">Chromosome</location>
    </subcellularLocation>
</comment>
<comment type="similarity">
    <text evidence="1">Belongs to the histone H1/H5 family.</text>
</comment>
<evidence type="ECO:0000255" key="1">
    <source>
        <dbReference type="PROSITE-ProRule" id="PRU00837"/>
    </source>
</evidence>
<evidence type="ECO:0000256" key="2">
    <source>
        <dbReference type="SAM" id="MobiDB-lite"/>
    </source>
</evidence>